<organism>
    <name type="scientific">Schizosaccharomyces pombe (strain 972 / ATCC 24843)</name>
    <name type="common">Fission yeast</name>
    <dbReference type="NCBI Taxonomy" id="284812"/>
    <lineage>
        <taxon>Eukaryota</taxon>
        <taxon>Fungi</taxon>
        <taxon>Dikarya</taxon>
        <taxon>Ascomycota</taxon>
        <taxon>Taphrinomycotina</taxon>
        <taxon>Schizosaccharomycetes</taxon>
        <taxon>Schizosaccharomycetales</taxon>
        <taxon>Schizosaccharomycetaceae</taxon>
        <taxon>Schizosaccharomyces</taxon>
    </lineage>
</organism>
<accession>O13619</accession>
<name>YHI3_SCHPO</name>
<evidence type="ECO:0000255" key="1"/>
<evidence type="ECO:0000256" key="2">
    <source>
        <dbReference type="SAM" id="MobiDB-lite"/>
    </source>
</evidence>
<evidence type="ECO:0000269" key="3">
    <source>
    </source>
</evidence>
<evidence type="ECO:0000305" key="4"/>
<dbReference type="EMBL" id="AB004535">
    <property type="protein sequence ID" value="BAA21407.1"/>
    <property type="molecule type" value="Genomic_DNA"/>
</dbReference>
<dbReference type="EMBL" id="CU329671">
    <property type="protein sequence ID" value="CAC37371.1"/>
    <property type="molecule type" value="Genomic_DNA"/>
</dbReference>
<dbReference type="SMR" id="O13619"/>
<dbReference type="BioGRID" id="277819">
    <property type="interactions" value="7"/>
</dbReference>
<dbReference type="STRING" id="284812.O13619"/>
<dbReference type="PaxDb" id="4896-SPBP22H7.03.1"/>
<dbReference type="EnsemblFungi" id="SPBP22H7.03.1">
    <property type="protein sequence ID" value="SPBP22H7.03.1:pep"/>
    <property type="gene ID" value="SPBP22H7.03"/>
</dbReference>
<dbReference type="KEGG" id="spo:2541307"/>
<dbReference type="PomBase" id="SPBP22H7.03"/>
<dbReference type="VEuPathDB" id="FungiDB:SPBP22H7.03"/>
<dbReference type="HOGENOM" id="CLU_136364_0_0_1"/>
<dbReference type="InParanoid" id="O13619"/>
<dbReference type="OMA" id="NSMESPM"/>
<dbReference type="PRO" id="PR:O13619"/>
<dbReference type="Proteomes" id="UP000002485">
    <property type="component" value="Chromosome II"/>
</dbReference>
<dbReference type="GO" id="GO:0051285">
    <property type="term" value="C:cell cortex of cell tip"/>
    <property type="evidence" value="ECO:0000314"/>
    <property type="project" value="PomBase"/>
</dbReference>
<dbReference type="GO" id="GO:0032153">
    <property type="term" value="C:cell division site"/>
    <property type="evidence" value="ECO:0000314"/>
    <property type="project" value="PomBase"/>
</dbReference>
<dbReference type="GO" id="GO:0005737">
    <property type="term" value="C:cytoplasm"/>
    <property type="evidence" value="ECO:0007005"/>
    <property type="project" value="PomBase"/>
</dbReference>
<dbReference type="GO" id="GO:0000935">
    <property type="term" value="C:division septum"/>
    <property type="evidence" value="ECO:0000314"/>
    <property type="project" value="PomBase"/>
</dbReference>
<dbReference type="GO" id="GO:0005886">
    <property type="term" value="C:plasma membrane"/>
    <property type="evidence" value="ECO:0000269"/>
    <property type="project" value="PomBase"/>
</dbReference>
<dbReference type="GO" id="GO:0030674">
    <property type="term" value="F:protein-macromolecule adaptor activity"/>
    <property type="evidence" value="ECO:0000315"/>
    <property type="project" value="PomBase"/>
</dbReference>
<dbReference type="GO" id="GO:0140278">
    <property type="term" value="P:mitotic division septum assembly"/>
    <property type="evidence" value="ECO:0000269"/>
    <property type="project" value="PomBase"/>
</dbReference>
<dbReference type="InterPro" id="IPR005629">
    <property type="entry name" value="Skn1/Kre6/Sbg1"/>
</dbReference>
<dbReference type="Pfam" id="PF03935">
    <property type="entry name" value="SKN1_KRE6_Sbg1"/>
    <property type="match status" value="1"/>
</dbReference>
<comment type="subcellular location">
    <subcellularLocation>
        <location evidence="3">Cytoplasm</location>
    </subcellularLocation>
    <subcellularLocation>
        <location evidence="4">Membrane</location>
        <topology evidence="4">Single-pass membrane protein</topology>
    </subcellularLocation>
</comment>
<protein>
    <recommendedName>
        <fullName>Uncharacterized protein P22H7.03</fullName>
    </recommendedName>
</protein>
<feature type="chain" id="PRO_0000304012" description="Uncharacterized protein P22H7.03">
    <location>
        <begin position="1"/>
        <end position="181"/>
    </location>
</feature>
<feature type="transmembrane region" description="Helical" evidence="1">
    <location>
        <begin position="149"/>
        <end position="169"/>
    </location>
</feature>
<feature type="region of interest" description="Disordered" evidence="2">
    <location>
        <begin position="25"/>
        <end position="47"/>
    </location>
</feature>
<feature type="compositionally biased region" description="Acidic residues" evidence="2">
    <location>
        <begin position="32"/>
        <end position="47"/>
    </location>
</feature>
<sequence>MSQSPIDYNESLRPDDMLDNELNYELANEVSAGDEEPYDDDIWESEDLEPVGHDIQPMDSVSDFHVKDFSEKKYSPYTDEIASAQLTGPSESAFGSASSLGTVESPVTMQSATLLWDPSVKEVDDILHNEDFYDGRDLNIFTLRGFVNILTLILLSCGLLMLFIGYPILSAVEVEKQRKKN</sequence>
<gene>
    <name type="ORF">pi028</name>
    <name type="ORF">SPBP22H7.03</name>
</gene>
<keyword id="KW-0963">Cytoplasm</keyword>
<keyword id="KW-0472">Membrane</keyword>
<keyword id="KW-1185">Reference proteome</keyword>
<keyword id="KW-0812">Transmembrane</keyword>
<keyword id="KW-1133">Transmembrane helix</keyword>
<proteinExistence type="predicted"/>
<reference key="1">
    <citation type="journal article" date="2000" name="Yeast">
        <title>A 38 kb segment containing the cdc2 gene from the left arm of fission yeast chromosome II: sequence analysis and characterization of the genomic DNA and cDNAs encoded on the segment.</title>
        <authorList>
            <person name="Machida M."/>
            <person name="Yamazaki S."/>
            <person name="Kunihiro S."/>
            <person name="Tanaka T."/>
            <person name="Kushida N."/>
            <person name="Jinno K."/>
            <person name="Haikawa Y."/>
            <person name="Yamazaki J."/>
            <person name="Yamamoto S."/>
            <person name="Sekine M."/>
            <person name="Oguchi A."/>
            <person name="Nagai Y."/>
            <person name="Sakai M."/>
            <person name="Aoki K."/>
            <person name="Ogura K."/>
            <person name="Kudoh Y."/>
            <person name="Kikuchi H."/>
            <person name="Zhang M.Q."/>
            <person name="Yanagida M."/>
        </authorList>
    </citation>
    <scope>NUCLEOTIDE SEQUENCE [LARGE SCALE GENOMIC DNA]</scope>
    <source>
        <strain>972 / ATCC 24843</strain>
    </source>
</reference>
<reference key="2">
    <citation type="journal article" date="2002" name="Nature">
        <title>The genome sequence of Schizosaccharomyces pombe.</title>
        <authorList>
            <person name="Wood V."/>
            <person name="Gwilliam R."/>
            <person name="Rajandream M.A."/>
            <person name="Lyne M.H."/>
            <person name="Lyne R."/>
            <person name="Stewart A."/>
            <person name="Sgouros J.G."/>
            <person name="Peat N."/>
            <person name="Hayles J."/>
            <person name="Baker S.G."/>
            <person name="Basham D."/>
            <person name="Bowman S."/>
            <person name="Brooks K."/>
            <person name="Brown D."/>
            <person name="Brown S."/>
            <person name="Chillingworth T."/>
            <person name="Churcher C.M."/>
            <person name="Collins M."/>
            <person name="Connor R."/>
            <person name="Cronin A."/>
            <person name="Davis P."/>
            <person name="Feltwell T."/>
            <person name="Fraser A."/>
            <person name="Gentles S."/>
            <person name="Goble A."/>
            <person name="Hamlin N."/>
            <person name="Harris D.E."/>
            <person name="Hidalgo J."/>
            <person name="Hodgson G."/>
            <person name="Holroyd S."/>
            <person name="Hornsby T."/>
            <person name="Howarth S."/>
            <person name="Huckle E.J."/>
            <person name="Hunt S."/>
            <person name="Jagels K."/>
            <person name="James K.D."/>
            <person name="Jones L."/>
            <person name="Jones M."/>
            <person name="Leather S."/>
            <person name="McDonald S."/>
            <person name="McLean J."/>
            <person name="Mooney P."/>
            <person name="Moule S."/>
            <person name="Mungall K.L."/>
            <person name="Murphy L.D."/>
            <person name="Niblett D."/>
            <person name="Odell C."/>
            <person name="Oliver K."/>
            <person name="O'Neil S."/>
            <person name="Pearson D."/>
            <person name="Quail M.A."/>
            <person name="Rabbinowitsch E."/>
            <person name="Rutherford K.M."/>
            <person name="Rutter S."/>
            <person name="Saunders D."/>
            <person name="Seeger K."/>
            <person name="Sharp S."/>
            <person name="Skelton J."/>
            <person name="Simmonds M.N."/>
            <person name="Squares R."/>
            <person name="Squares S."/>
            <person name="Stevens K."/>
            <person name="Taylor K."/>
            <person name="Taylor R.G."/>
            <person name="Tivey A."/>
            <person name="Walsh S.V."/>
            <person name="Warren T."/>
            <person name="Whitehead S."/>
            <person name="Woodward J.R."/>
            <person name="Volckaert G."/>
            <person name="Aert R."/>
            <person name="Robben J."/>
            <person name="Grymonprez B."/>
            <person name="Weltjens I."/>
            <person name="Vanstreels E."/>
            <person name="Rieger M."/>
            <person name="Schaefer M."/>
            <person name="Mueller-Auer S."/>
            <person name="Gabel C."/>
            <person name="Fuchs M."/>
            <person name="Duesterhoeft A."/>
            <person name="Fritzc C."/>
            <person name="Holzer E."/>
            <person name="Moestl D."/>
            <person name="Hilbert H."/>
            <person name="Borzym K."/>
            <person name="Langer I."/>
            <person name="Beck A."/>
            <person name="Lehrach H."/>
            <person name="Reinhardt R."/>
            <person name="Pohl T.M."/>
            <person name="Eger P."/>
            <person name="Zimmermann W."/>
            <person name="Wedler H."/>
            <person name="Wambutt R."/>
            <person name="Purnelle B."/>
            <person name="Goffeau A."/>
            <person name="Cadieu E."/>
            <person name="Dreano S."/>
            <person name="Gloux S."/>
            <person name="Lelaure V."/>
            <person name="Mottier S."/>
            <person name="Galibert F."/>
            <person name="Aves S.J."/>
            <person name="Xiang Z."/>
            <person name="Hunt C."/>
            <person name="Moore K."/>
            <person name="Hurst S.M."/>
            <person name="Lucas M."/>
            <person name="Rochet M."/>
            <person name="Gaillardin C."/>
            <person name="Tallada V.A."/>
            <person name="Garzon A."/>
            <person name="Thode G."/>
            <person name="Daga R.R."/>
            <person name="Cruzado L."/>
            <person name="Jimenez J."/>
            <person name="Sanchez M."/>
            <person name="del Rey F."/>
            <person name="Benito J."/>
            <person name="Dominguez A."/>
            <person name="Revuelta J.L."/>
            <person name="Moreno S."/>
            <person name="Armstrong J."/>
            <person name="Forsburg S.L."/>
            <person name="Cerutti L."/>
            <person name="Lowe T."/>
            <person name="McCombie W.R."/>
            <person name="Paulsen I."/>
            <person name="Potashkin J."/>
            <person name="Shpakovski G.V."/>
            <person name="Ussery D."/>
            <person name="Barrell B.G."/>
            <person name="Nurse P."/>
        </authorList>
    </citation>
    <scope>NUCLEOTIDE SEQUENCE [LARGE SCALE GENOMIC DNA]</scope>
    <source>
        <strain>972 / ATCC 24843</strain>
    </source>
</reference>
<reference key="3">
    <citation type="journal article" date="2006" name="Nat. Biotechnol.">
        <title>ORFeome cloning and global analysis of protein localization in the fission yeast Schizosaccharomyces pombe.</title>
        <authorList>
            <person name="Matsuyama A."/>
            <person name="Arai R."/>
            <person name="Yashiroda Y."/>
            <person name="Shirai A."/>
            <person name="Kamata A."/>
            <person name="Sekido S."/>
            <person name="Kobayashi Y."/>
            <person name="Hashimoto A."/>
            <person name="Hamamoto M."/>
            <person name="Hiraoka Y."/>
            <person name="Horinouchi S."/>
            <person name="Yoshida M."/>
        </authorList>
    </citation>
    <scope>SUBCELLULAR LOCATION [LARGE SCALE ANALYSIS]</scope>
</reference>